<dbReference type="EC" id="1.1.1.37" evidence="1"/>
<dbReference type="EMBL" id="CP000472">
    <property type="protein sequence ID" value="ACJ30763.1"/>
    <property type="molecule type" value="Genomic_DNA"/>
</dbReference>
<dbReference type="RefSeq" id="WP_020914103.1">
    <property type="nucleotide sequence ID" value="NC_011566.1"/>
</dbReference>
<dbReference type="SMR" id="B8CSY7"/>
<dbReference type="STRING" id="225849.swp_4100"/>
<dbReference type="KEGG" id="swp:swp_4100"/>
<dbReference type="eggNOG" id="COG0039">
    <property type="taxonomic scope" value="Bacteria"/>
</dbReference>
<dbReference type="HOGENOM" id="CLU_047181_1_0_6"/>
<dbReference type="OrthoDB" id="9802969at2"/>
<dbReference type="Proteomes" id="UP000000753">
    <property type="component" value="Chromosome"/>
</dbReference>
<dbReference type="GO" id="GO:0005737">
    <property type="term" value="C:cytoplasm"/>
    <property type="evidence" value="ECO:0007669"/>
    <property type="project" value="TreeGrafter"/>
</dbReference>
<dbReference type="GO" id="GO:0030060">
    <property type="term" value="F:L-malate dehydrogenase (NAD+) activity"/>
    <property type="evidence" value="ECO:0007669"/>
    <property type="project" value="UniProtKB-UniRule"/>
</dbReference>
<dbReference type="GO" id="GO:0006108">
    <property type="term" value="P:malate metabolic process"/>
    <property type="evidence" value="ECO:0007669"/>
    <property type="project" value="InterPro"/>
</dbReference>
<dbReference type="GO" id="GO:0006099">
    <property type="term" value="P:tricarboxylic acid cycle"/>
    <property type="evidence" value="ECO:0007669"/>
    <property type="project" value="UniProtKB-UniRule"/>
</dbReference>
<dbReference type="CDD" id="cd01337">
    <property type="entry name" value="MDH_glyoxysomal_mitochondrial"/>
    <property type="match status" value="1"/>
</dbReference>
<dbReference type="FunFam" id="3.40.50.720:FF:000017">
    <property type="entry name" value="Malate dehydrogenase"/>
    <property type="match status" value="1"/>
</dbReference>
<dbReference type="FunFam" id="3.90.110.10:FF:000001">
    <property type="entry name" value="Malate dehydrogenase"/>
    <property type="match status" value="1"/>
</dbReference>
<dbReference type="Gene3D" id="3.90.110.10">
    <property type="entry name" value="Lactate dehydrogenase/glycoside hydrolase, family 4, C-terminal"/>
    <property type="match status" value="1"/>
</dbReference>
<dbReference type="Gene3D" id="3.40.50.720">
    <property type="entry name" value="NAD(P)-binding Rossmann-like Domain"/>
    <property type="match status" value="1"/>
</dbReference>
<dbReference type="HAMAP" id="MF_01516">
    <property type="entry name" value="Malate_dehydrog_1"/>
    <property type="match status" value="1"/>
</dbReference>
<dbReference type="InterPro" id="IPR001557">
    <property type="entry name" value="L-lactate/malate_DH"/>
</dbReference>
<dbReference type="InterPro" id="IPR022383">
    <property type="entry name" value="Lactate/malate_DH_C"/>
</dbReference>
<dbReference type="InterPro" id="IPR001236">
    <property type="entry name" value="Lactate/malate_DH_N"/>
</dbReference>
<dbReference type="InterPro" id="IPR015955">
    <property type="entry name" value="Lactate_DH/Glyco_Ohase_4_C"/>
</dbReference>
<dbReference type="InterPro" id="IPR001252">
    <property type="entry name" value="Malate_DH_AS"/>
</dbReference>
<dbReference type="InterPro" id="IPR010097">
    <property type="entry name" value="Malate_DH_type1"/>
</dbReference>
<dbReference type="InterPro" id="IPR023958">
    <property type="entry name" value="Malate_DH_type1_bac"/>
</dbReference>
<dbReference type="InterPro" id="IPR036291">
    <property type="entry name" value="NAD(P)-bd_dom_sf"/>
</dbReference>
<dbReference type="NCBIfam" id="TIGR01772">
    <property type="entry name" value="MDH_euk_gproteo"/>
    <property type="match status" value="1"/>
</dbReference>
<dbReference type="PANTHER" id="PTHR11540">
    <property type="entry name" value="MALATE AND LACTATE DEHYDROGENASE"/>
    <property type="match status" value="1"/>
</dbReference>
<dbReference type="PANTHER" id="PTHR11540:SF16">
    <property type="entry name" value="MALATE DEHYDROGENASE, MITOCHONDRIAL"/>
    <property type="match status" value="1"/>
</dbReference>
<dbReference type="Pfam" id="PF02866">
    <property type="entry name" value="Ldh_1_C"/>
    <property type="match status" value="1"/>
</dbReference>
<dbReference type="Pfam" id="PF00056">
    <property type="entry name" value="Ldh_1_N"/>
    <property type="match status" value="1"/>
</dbReference>
<dbReference type="PIRSF" id="PIRSF000102">
    <property type="entry name" value="Lac_mal_DH"/>
    <property type="match status" value="1"/>
</dbReference>
<dbReference type="SUPFAM" id="SSF56327">
    <property type="entry name" value="LDH C-terminal domain-like"/>
    <property type="match status" value="1"/>
</dbReference>
<dbReference type="SUPFAM" id="SSF51735">
    <property type="entry name" value="NAD(P)-binding Rossmann-fold domains"/>
    <property type="match status" value="1"/>
</dbReference>
<dbReference type="PROSITE" id="PS00068">
    <property type="entry name" value="MDH"/>
    <property type="match status" value="1"/>
</dbReference>
<accession>B8CSY7</accession>
<evidence type="ECO:0000255" key="1">
    <source>
        <dbReference type="HAMAP-Rule" id="MF_01516"/>
    </source>
</evidence>
<proteinExistence type="inferred from homology"/>
<organism>
    <name type="scientific">Shewanella piezotolerans (strain WP3 / JCM 13877)</name>
    <dbReference type="NCBI Taxonomy" id="225849"/>
    <lineage>
        <taxon>Bacteria</taxon>
        <taxon>Pseudomonadati</taxon>
        <taxon>Pseudomonadota</taxon>
        <taxon>Gammaproteobacteria</taxon>
        <taxon>Alteromonadales</taxon>
        <taxon>Shewanellaceae</taxon>
        <taxon>Shewanella</taxon>
    </lineage>
</organism>
<sequence>MKVAVLGAAGGIGQALALLLKTQLPAGSKLSLYDIAPVTPGVAVDLSHIPTDVEVKGFAGEDPTAALEGADVVLISAGVARKPGMDRSDLFNINAGIVRNLVEKCAATSPKALIGIITNPVNTTVAIAAEVLKKAGVYDKNRLFGVTTLDVIRSETFVAAAKGLNVADVKVNVIGGHSGVTILPLLSQIEGVSFTDEEVAALTTRIQNAGTEVVEAKAGGGSATLSMGQAACRFGLSLVRGLQGEANVVECAYVDGGSEHAEFFAQPVVLGKNGVEQVLAYGDVSAFEANARDAMLDTLKADIDLGIEFVK</sequence>
<keyword id="KW-0520">NAD</keyword>
<keyword id="KW-0560">Oxidoreductase</keyword>
<keyword id="KW-0816">Tricarboxylic acid cycle</keyword>
<protein>
    <recommendedName>
        <fullName evidence="1">Malate dehydrogenase</fullName>
        <ecNumber evidence="1">1.1.1.37</ecNumber>
    </recommendedName>
</protein>
<comment type="function">
    <text evidence="1">Catalyzes the reversible oxidation of malate to oxaloacetate.</text>
</comment>
<comment type="catalytic activity">
    <reaction evidence="1">
        <text>(S)-malate + NAD(+) = oxaloacetate + NADH + H(+)</text>
        <dbReference type="Rhea" id="RHEA:21432"/>
        <dbReference type="ChEBI" id="CHEBI:15378"/>
        <dbReference type="ChEBI" id="CHEBI:15589"/>
        <dbReference type="ChEBI" id="CHEBI:16452"/>
        <dbReference type="ChEBI" id="CHEBI:57540"/>
        <dbReference type="ChEBI" id="CHEBI:57945"/>
        <dbReference type="EC" id="1.1.1.37"/>
    </reaction>
</comment>
<comment type="subunit">
    <text evidence="1">Homodimer.</text>
</comment>
<comment type="similarity">
    <text evidence="1">Belongs to the LDH/MDH superfamily. MDH type 1 family.</text>
</comment>
<feature type="chain" id="PRO_1000191597" description="Malate dehydrogenase">
    <location>
        <begin position="1"/>
        <end position="311"/>
    </location>
</feature>
<feature type="active site" description="Proton acceptor" evidence="1">
    <location>
        <position position="177"/>
    </location>
</feature>
<feature type="binding site" evidence="1">
    <location>
        <begin position="7"/>
        <end position="13"/>
    </location>
    <ligand>
        <name>NAD(+)</name>
        <dbReference type="ChEBI" id="CHEBI:57540"/>
    </ligand>
</feature>
<feature type="binding site" evidence="1">
    <location>
        <position position="34"/>
    </location>
    <ligand>
        <name>NAD(+)</name>
        <dbReference type="ChEBI" id="CHEBI:57540"/>
    </ligand>
</feature>
<feature type="binding site" evidence="1">
    <location>
        <position position="81"/>
    </location>
    <ligand>
        <name>substrate</name>
    </ligand>
</feature>
<feature type="binding site" evidence="1">
    <location>
        <position position="87"/>
    </location>
    <ligand>
        <name>substrate</name>
    </ligand>
</feature>
<feature type="binding site" evidence="1">
    <location>
        <position position="94"/>
    </location>
    <ligand>
        <name>NAD(+)</name>
        <dbReference type="ChEBI" id="CHEBI:57540"/>
    </ligand>
</feature>
<feature type="binding site" evidence="1">
    <location>
        <begin position="117"/>
        <end position="119"/>
    </location>
    <ligand>
        <name>NAD(+)</name>
        <dbReference type="ChEBI" id="CHEBI:57540"/>
    </ligand>
</feature>
<feature type="binding site" evidence="1">
    <location>
        <position position="119"/>
    </location>
    <ligand>
        <name>substrate</name>
    </ligand>
</feature>
<feature type="binding site" evidence="1">
    <location>
        <position position="153"/>
    </location>
    <ligand>
        <name>substrate</name>
    </ligand>
</feature>
<feature type="binding site" evidence="1">
    <location>
        <position position="227"/>
    </location>
    <ligand>
        <name>NAD(+)</name>
        <dbReference type="ChEBI" id="CHEBI:57540"/>
    </ligand>
</feature>
<gene>
    <name evidence="1" type="primary">mdh</name>
    <name type="ordered locus">swp_4100</name>
</gene>
<name>MDH_SHEPW</name>
<reference key="1">
    <citation type="journal article" date="2008" name="PLoS ONE">
        <title>Environmental adaptation: genomic analysis of the piezotolerant and psychrotolerant deep-sea iron reducing bacterium Shewanella piezotolerans WP3.</title>
        <authorList>
            <person name="Wang F."/>
            <person name="Wang J."/>
            <person name="Jian H."/>
            <person name="Zhang B."/>
            <person name="Li S."/>
            <person name="Wang F."/>
            <person name="Zeng X."/>
            <person name="Gao L."/>
            <person name="Bartlett D.H."/>
            <person name="Yu J."/>
            <person name="Hu S."/>
            <person name="Xiao X."/>
        </authorList>
    </citation>
    <scope>NUCLEOTIDE SEQUENCE [LARGE SCALE GENOMIC DNA]</scope>
    <source>
        <strain>WP3 / JCM 13877</strain>
    </source>
</reference>